<feature type="chain" id="PRO_0000216773" description="Haloalkane dehalogenase">
    <location>
        <begin position="1"/>
        <end position="307"/>
    </location>
</feature>
<feature type="domain" description="AB hydrolase-1" evidence="2">
    <location>
        <begin position="34"/>
        <end position="158"/>
    </location>
</feature>
<feature type="active site" description="Nucleophile" evidence="1">
    <location>
        <position position="106"/>
    </location>
</feature>
<feature type="active site" description="Proton donor" evidence="1">
    <location>
        <position position="130"/>
    </location>
</feature>
<feature type="active site" description="Proton acceptor" evidence="1">
    <location>
        <position position="272"/>
    </location>
</feature>
<gene>
    <name type="primary">dhaAF</name>
</gene>
<dbReference type="EC" id="3.8.1.5"/>
<dbReference type="EMBL" id="AJ012627">
    <property type="protein sequence ID" value="CAA10076.1"/>
    <property type="molecule type" value="Genomic_DNA"/>
</dbReference>
<dbReference type="EMBL" id="AJ250372">
    <property type="protein sequence ID" value="CAB65289.1"/>
    <property type="molecule type" value="Genomic_DNA"/>
</dbReference>
<dbReference type="SMR" id="Q9ZER0"/>
<dbReference type="ESTHER" id="rhoso-halo1">
    <property type="family name" value="Haloalkane_dehalogenase-HLD2"/>
</dbReference>
<dbReference type="BRENDA" id="3.8.1.5">
    <property type="organism ID" value="3490"/>
</dbReference>
<dbReference type="UniPathway" id="UPA00006"/>
<dbReference type="GO" id="GO:0016020">
    <property type="term" value="C:membrane"/>
    <property type="evidence" value="ECO:0007669"/>
    <property type="project" value="TreeGrafter"/>
</dbReference>
<dbReference type="GO" id="GO:0018786">
    <property type="term" value="F:haloalkane dehalogenase activity"/>
    <property type="evidence" value="ECO:0007669"/>
    <property type="project" value="UniProtKB-UniRule"/>
</dbReference>
<dbReference type="GO" id="GO:0009636">
    <property type="term" value="P:response to toxic substance"/>
    <property type="evidence" value="ECO:0007669"/>
    <property type="project" value="UniProtKB-KW"/>
</dbReference>
<dbReference type="Gene3D" id="3.40.50.1820">
    <property type="entry name" value="alpha/beta hydrolase"/>
    <property type="match status" value="1"/>
</dbReference>
<dbReference type="HAMAP" id="MF_01231">
    <property type="entry name" value="Haloalk_dehal_type2"/>
    <property type="match status" value="1"/>
</dbReference>
<dbReference type="InterPro" id="IPR000073">
    <property type="entry name" value="AB_hydrolase_1"/>
</dbReference>
<dbReference type="InterPro" id="IPR029058">
    <property type="entry name" value="AB_hydrolase_fold"/>
</dbReference>
<dbReference type="InterPro" id="IPR050266">
    <property type="entry name" value="AB_hydrolase_sf"/>
</dbReference>
<dbReference type="InterPro" id="IPR000639">
    <property type="entry name" value="Epox_hydrolase-like"/>
</dbReference>
<dbReference type="InterPro" id="IPR023594">
    <property type="entry name" value="Haloalkane_dehalogenase_2"/>
</dbReference>
<dbReference type="NCBIfam" id="NF002938">
    <property type="entry name" value="PRK03592.1"/>
    <property type="match status" value="1"/>
</dbReference>
<dbReference type="PANTHER" id="PTHR43798:SF24">
    <property type="entry name" value="CIS-3-ALKYL-4-ALKYLOXETAN-2-ONE DECARBOXYLASE"/>
    <property type="match status" value="1"/>
</dbReference>
<dbReference type="PANTHER" id="PTHR43798">
    <property type="entry name" value="MONOACYLGLYCEROL LIPASE"/>
    <property type="match status" value="1"/>
</dbReference>
<dbReference type="Pfam" id="PF00561">
    <property type="entry name" value="Abhydrolase_1"/>
    <property type="match status" value="1"/>
</dbReference>
<dbReference type="PRINTS" id="PR00412">
    <property type="entry name" value="EPOXHYDRLASE"/>
</dbReference>
<dbReference type="SUPFAM" id="SSF53474">
    <property type="entry name" value="alpha/beta-Hydrolases"/>
    <property type="match status" value="1"/>
</dbReference>
<accession>Q9ZER0</accession>
<organism>
    <name type="scientific">Mycobacterium sp. (strain GP1)</name>
    <dbReference type="NCBI Taxonomy" id="106323"/>
    <lineage>
        <taxon>Bacteria</taxon>
        <taxon>Bacillati</taxon>
        <taxon>Actinomycetota</taxon>
        <taxon>Actinomycetes</taxon>
        <taxon>Mycobacteriales</taxon>
        <taxon>Mycobacteriaceae</taxon>
        <taxon>Mycobacterium</taxon>
    </lineage>
</organism>
<keyword id="KW-0216">Detoxification</keyword>
<keyword id="KW-0378">Hydrolase</keyword>
<proteinExistence type="evidence at transcript level"/>
<sequence length="307" mass="34726">MSEIGTGFPFDPHYVEVLGERMHYVDVGPRDGTPVLFLHGNPTSSYLWRNIIPHVAPSHRCIAPDLIGMGKSDKPDLDYFFDDHVRYLDAFIEALGLEEVVLVIHDWGSALGFHWAKRNPERVKGIACMEFIRPIPTWDEWPEFARETFQAFRTADVGRELIIDQNAFIEGALPKFVVRPLTEVEMDHYREPFLKPVDREPLWRFPNELPIAGEPANIVALVEAYMNWLHQSPVPKLLFWGTPGVLISPAEAARLAESLPNCKTVDIGPGLHFLQEDNPDLIGSEIARWLPALIVGKSIEFDGGWAT</sequence>
<evidence type="ECO:0000250" key="1"/>
<evidence type="ECO:0000255" key="2"/>
<evidence type="ECO:0000305" key="3"/>
<name>DHAA_MYCSX</name>
<protein>
    <recommendedName>
        <fullName>Haloalkane dehalogenase</fullName>
        <ecNumber>3.8.1.5</ecNumber>
    </recommendedName>
</protein>
<comment type="function">
    <text>Catalyzes hydrolytic cleavage of carbon-halogen bonds in halogenated aliphatic compounds, leading to the formation of the corresponding primary alcohols, halide ions and protons. Has a broad substrate specificity, which includes mono- and di-chlorinated and brominated alkanes. The highest activity was found with 1,2-dibromoethane, whereas low activity was measured with the analog 1,2-dichloroethane.</text>
</comment>
<comment type="catalytic activity">
    <reaction>
        <text>1-haloalkane + H2O = a halide anion + a primary alcohol + H(+)</text>
        <dbReference type="Rhea" id="RHEA:19081"/>
        <dbReference type="ChEBI" id="CHEBI:15377"/>
        <dbReference type="ChEBI" id="CHEBI:15378"/>
        <dbReference type="ChEBI" id="CHEBI:15734"/>
        <dbReference type="ChEBI" id="CHEBI:16042"/>
        <dbReference type="ChEBI" id="CHEBI:18060"/>
        <dbReference type="EC" id="3.8.1.5"/>
    </reaction>
</comment>
<comment type="pathway">
    <text>Xenobiotic degradation; 1,2-dibromoethane degradation.</text>
</comment>
<comment type="subunit">
    <text evidence="1">Monomer.</text>
</comment>
<comment type="induction">
    <text>Constitutively expressed.</text>
</comment>
<comment type="similarity">
    <text evidence="3">Belongs to the haloalkane dehalogenase family. Type 2 subfamily.</text>
</comment>
<reference key="1">
    <citation type="journal article" date="1999" name="J. Bacteriol.">
        <title>Degradation of 1,2-dibromoethane by Mycobacterium sp. strain GP1.</title>
        <authorList>
            <person name="Poelarends G.J."/>
            <person name="van Hylckama Vlieg J.E.T."/>
            <person name="Marchesi J.R."/>
            <person name="Freitas dos Santos L.M."/>
            <person name="Janssen D.B."/>
        </authorList>
    </citation>
    <scope>NUCLEOTIDE SEQUENCE [GENOMIC DNA]</scope>
</reference>
<reference key="2">
    <citation type="journal article" date="2000" name="J. Bacteriol.">
        <title>Roles of horizontal gene transfer and gene integration in evolution of 1,3-dichloropropene- and 1,2-dibromoethane-degradative pathways.</title>
        <authorList>
            <person name="Poelarends G.J."/>
            <person name="Kulakov L.A."/>
            <person name="Larkin M.J."/>
            <person name="van Hylckama Vlieg J.E.T."/>
            <person name="Janssen D.B."/>
        </authorList>
    </citation>
    <scope>NUCLEOTIDE SEQUENCE [GENOMIC DNA]</scope>
</reference>